<name>TYRO_RHIML</name>
<accession>P33180</accession>
<dbReference type="EC" id="1.14.18.1"/>
<dbReference type="EMBL" id="X69526">
    <property type="protein sequence ID" value="CAA49273.1"/>
    <property type="molecule type" value="Genomic_DNA"/>
</dbReference>
<dbReference type="PIR" id="A48657">
    <property type="entry name" value="A48657"/>
</dbReference>
<dbReference type="SMR" id="P33180"/>
<dbReference type="GO" id="GO:0046872">
    <property type="term" value="F:metal ion binding"/>
    <property type="evidence" value="ECO:0007669"/>
    <property type="project" value="UniProtKB-KW"/>
</dbReference>
<dbReference type="GO" id="GO:0004503">
    <property type="term" value="F:tyrosinase activity"/>
    <property type="evidence" value="ECO:0007669"/>
    <property type="project" value="UniProtKB-EC"/>
</dbReference>
<dbReference type="GO" id="GO:0042438">
    <property type="term" value="P:melanin biosynthetic process"/>
    <property type="evidence" value="ECO:0007669"/>
    <property type="project" value="UniProtKB-KW"/>
</dbReference>
<dbReference type="Gene3D" id="1.10.1280.10">
    <property type="entry name" value="Di-copper center containing domain from catechol oxidase"/>
    <property type="match status" value="1"/>
</dbReference>
<dbReference type="InterPro" id="IPR008922">
    <property type="entry name" value="Di-copper_centre_dom_sf"/>
</dbReference>
<dbReference type="InterPro" id="IPR050316">
    <property type="entry name" value="Tyrosinase/Hemocyanin"/>
</dbReference>
<dbReference type="InterPro" id="IPR002227">
    <property type="entry name" value="Tyrosinase_Cu-bd"/>
</dbReference>
<dbReference type="PANTHER" id="PTHR11474:SF76">
    <property type="entry name" value="SHKT DOMAIN-CONTAINING PROTEIN"/>
    <property type="match status" value="1"/>
</dbReference>
<dbReference type="PANTHER" id="PTHR11474">
    <property type="entry name" value="TYROSINASE FAMILY MEMBER"/>
    <property type="match status" value="1"/>
</dbReference>
<dbReference type="Pfam" id="PF00264">
    <property type="entry name" value="Tyrosinase"/>
    <property type="match status" value="1"/>
</dbReference>
<dbReference type="PRINTS" id="PR00092">
    <property type="entry name" value="TYROSINASE"/>
</dbReference>
<dbReference type="SUPFAM" id="SSF48056">
    <property type="entry name" value="Di-copper centre-containing domain"/>
    <property type="match status" value="1"/>
</dbReference>
<dbReference type="PROSITE" id="PS00497">
    <property type="entry name" value="TYROSINASE_1"/>
    <property type="match status" value="1"/>
</dbReference>
<dbReference type="PROSITE" id="PS00498">
    <property type="entry name" value="TYROSINASE_2"/>
    <property type="match status" value="1"/>
</dbReference>
<proteinExistence type="inferred from homology"/>
<evidence type="ECO:0000250" key="1">
    <source>
        <dbReference type="UniProtKB" id="Q9ZP19"/>
    </source>
</evidence>
<evidence type="ECO:0000305" key="2"/>
<protein>
    <recommendedName>
        <fullName>Tyrosinase</fullName>
        <ecNumber>1.14.18.1</ecNumber>
    </recommendedName>
    <alternativeName>
        <fullName>Monophenol monooxygenase</fullName>
    </alternativeName>
</protein>
<geneLocation type="plasmid">
    <name>pRmeGR4b</name>
</geneLocation>
<feature type="chain" id="PRO_0000186735" description="Tyrosinase">
    <location>
        <begin position="1"/>
        <end position="494"/>
    </location>
</feature>
<feature type="binding site" evidence="1">
    <location>
        <position position="38"/>
    </location>
    <ligand>
        <name>Cu cation</name>
        <dbReference type="ChEBI" id="CHEBI:23378"/>
        <label>A</label>
    </ligand>
</feature>
<feature type="binding site" evidence="1">
    <location>
        <position position="53"/>
    </location>
    <ligand>
        <name>Cu cation</name>
        <dbReference type="ChEBI" id="CHEBI:23378"/>
        <label>A</label>
    </ligand>
</feature>
<feature type="binding site" evidence="1">
    <location>
        <position position="64"/>
    </location>
    <ligand>
        <name>Cu cation</name>
        <dbReference type="ChEBI" id="CHEBI:23378"/>
        <label>A</label>
    </ligand>
</feature>
<feature type="binding site" evidence="1">
    <location>
        <position position="224"/>
    </location>
    <ligand>
        <name>Cu cation</name>
        <dbReference type="ChEBI" id="CHEBI:23378"/>
        <label>B</label>
    </ligand>
</feature>
<feature type="binding site" evidence="1">
    <location>
        <position position="228"/>
    </location>
    <ligand>
        <name>Cu cation</name>
        <dbReference type="ChEBI" id="CHEBI:23378"/>
        <label>B</label>
    </ligand>
</feature>
<feature type="binding site" evidence="1">
    <location>
        <position position="256"/>
    </location>
    <ligand>
        <name>Cu cation</name>
        <dbReference type="ChEBI" id="CHEBI:23378"/>
        <label>B</label>
    </ligand>
</feature>
<keyword id="KW-0186">Copper</keyword>
<keyword id="KW-0470">Melanin biosynthesis</keyword>
<keyword id="KW-0479">Metal-binding</keyword>
<keyword id="KW-0503">Monooxygenase</keyword>
<keyword id="KW-0560">Oxidoreductase</keyword>
<keyword id="KW-0614">Plasmid</keyword>
<comment type="catalytic activity">
    <reaction>
        <text>2 L-dopa + O2 = 2 L-dopaquinone + 2 H2O</text>
        <dbReference type="Rhea" id="RHEA:34287"/>
        <dbReference type="ChEBI" id="CHEBI:15377"/>
        <dbReference type="ChEBI" id="CHEBI:15379"/>
        <dbReference type="ChEBI" id="CHEBI:57504"/>
        <dbReference type="ChEBI" id="CHEBI:57924"/>
        <dbReference type="EC" id="1.14.18.1"/>
    </reaction>
</comment>
<comment type="catalytic activity">
    <reaction>
        <text>L-tyrosine + O2 = L-dopaquinone + H2O</text>
        <dbReference type="Rhea" id="RHEA:18117"/>
        <dbReference type="ChEBI" id="CHEBI:15377"/>
        <dbReference type="ChEBI" id="CHEBI:15379"/>
        <dbReference type="ChEBI" id="CHEBI:57924"/>
        <dbReference type="ChEBI" id="CHEBI:58315"/>
        <dbReference type="EC" id="1.14.18.1"/>
    </reaction>
</comment>
<comment type="cofactor">
    <cofactor evidence="1">
        <name>Cu(2+)</name>
        <dbReference type="ChEBI" id="CHEBI:29036"/>
    </cofactor>
    <text evidence="1">Binds 2 copper ions per subunit.</text>
</comment>
<comment type="similarity">
    <text evidence="2">Belongs to the tyrosinase family.</text>
</comment>
<reference key="1">
    <citation type="journal article" date="1993" name="J. Bacteriol.">
        <title>Melanin production by Rhizobium meliloti GR4 is linked to nonsymbiotic plasmid pRmeGR4b: cloning, sequencing, and expression of the tyrosinase gene mepA.</title>
        <authorList>
            <person name="Mercado-Blanco J."/>
            <person name="Garcia F."/>
            <person name="Fernandez-Lopez M."/>
            <person name="Olivares J."/>
        </authorList>
    </citation>
    <scope>NUCLEOTIDE SEQUENCE [GENOMIC DNA]</scope>
    <source>
        <strain>GR4</strain>
    </source>
</reference>
<sequence>MTSADGQKDLQSYMDAVTAMLKLPPSDRRNWYRNGFIHLMDCPHGDWWFTSWHRGYLGYFEETCRELSGNPDFALPYWDWTANPEVLPPLFGTILDPVNSSAYIPDHNRFQDIMQEPIKAYWDSLSPAQLQQQNLRGYPDFDALWSDAMASFANQPNARFLTAQNPKLNPATQTAVDIDTIKASLAPTTFANDAGAPGLAFNSPVSSSHQVAPVGFSILEGQPHNRVHMSVGGQSAPYGLMSQNLSPLDPIFFLHHCNIDRLWDVWTRKQQAMGLPVGPTADQQTQYDPEPYLFYVNADGSPVSDKTRAADYLEIGDFDYDYDPGSGEEVIPVATAGRSAPIPALEAAVSASAAVAINKPATAKLTVSQELVDVAAKPSEQSRQFAKVSIAPPMDVGGLNFLVFISPEGTTPDLNPDGPDFAGSFEFFGVRHHHTDTVSFTIPIDKALDRLIDDGRLKAGEPIDFAVVVAQEGKRVEGSMPAKAQLTDIQVGSF</sequence>
<organism>
    <name type="scientific">Rhizobium meliloti</name>
    <name type="common">Ensifer meliloti</name>
    <name type="synonym">Sinorhizobium meliloti</name>
    <dbReference type="NCBI Taxonomy" id="382"/>
    <lineage>
        <taxon>Bacteria</taxon>
        <taxon>Pseudomonadati</taxon>
        <taxon>Pseudomonadota</taxon>
        <taxon>Alphaproteobacteria</taxon>
        <taxon>Hyphomicrobiales</taxon>
        <taxon>Rhizobiaceae</taxon>
        <taxon>Sinorhizobium/Ensifer group</taxon>
        <taxon>Sinorhizobium</taxon>
    </lineage>
</organism>
<gene>
    <name type="primary">mepA</name>
    <name type="synonym">melA</name>
</gene>